<evidence type="ECO:0000255" key="1">
    <source>
        <dbReference type="HAMAP-Rule" id="MF_00116"/>
    </source>
</evidence>
<reference key="1">
    <citation type="journal article" date="2003" name="Genome Res.">
        <title>Tropheryma whipplei twist: a human pathogenic Actinobacteria with a reduced genome.</title>
        <authorList>
            <person name="Raoult D."/>
            <person name="Ogata H."/>
            <person name="Audic S."/>
            <person name="Robert C."/>
            <person name="Suhre K."/>
            <person name="Drancourt M."/>
            <person name="Claverie J.-M."/>
        </authorList>
    </citation>
    <scope>NUCLEOTIDE SEQUENCE [LARGE SCALE GENOMIC DNA]</scope>
    <source>
        <strain>Twist</strain>
    </source>
</reference>
<accession>Q83G43</accession>
<sequence length="146" mass="15441">MTVEVLFKGGYTPQRAFDGDAGFDLQSSHTAVIQPRCRQVVKTGIAIALPDGYAGFIMPRSGLASENGITLVNSPGVIDAGYRGEISVVLINTDLHQAFHISQGDRIAQLVIMPVCHASFIEVDTLPGSARGISAFGSSGRHDTRG</sequence>
<comment type="function">
    <text evidence="1">This enzyme is involved in nucleotide metabolism: it produces dUMP, the immediate precursor of thymidine nucleotides and it decreases the intracellular concentration of dUTP so that uracil cannot be incorporated into DNA.</text>
</comment>
<comment type="catalytic activity">
    <reaction evidence="1">
        <text>dUTP + H2O = dUMP + diphosphate + H(+)</text>
        <dbReference type="Rhea" id="RHEA:10248"/>
        <dbReference type="ChEBI" id="CHEBI:15377"/>
        <dbReference type="ChEBI" id="CHEBI:15378"/>
        <dbReference type="ChEBI" id="CHEBI:33019"/>
        <dbReference type="ChEBI" id="CHEBI:61555"/>
        <dbReference type="ChEBI" id="CHEBI:246422"/>
        <dbReference type="EC" id="3.6.1.23"/>
    </reaction>
</comment>
<comment type="cofactor">
    <cofactor evidence="1">
        <name>Mg(2+)</name>
        <dbReference type="ChEBI" id="CHEBI:18420"/>
    </cofactor>
</comment>
<comment type="pathway">
    <text evidence="1">Pyrimidine metabolism; dUMP biosynthesis; dUMP from dCTP (dUTP route): step 2/2.</text>
</comment>
<comment type="similarity">
    <text evidence="1">Belongs to the dUTPase family.</text>
</comment>
<protein>
    <recommendedName>
        <fullName evidence="1">Deoxyuridine 5'-triphosphate nucleotidohydrolase</fullName>
        <shortName evidence="1">dUTPase</shortName>
        <ecNumber evidence="1">3.6.1.23</ecNumber>
    </recommendedName>
    <alternativeName>
        <fullName evidence="1">dUTP pyrophosphatase</fullName>
    </alternativeName>
</protein>
<organism>
    <name type="scientific">Tropheryma whipplei (strain Twist)</name>
    <name type="common">Whipple's bacillus</name>
    <dbReference type="NCBI Taxonomy" id="203267"/>
    <lineage>
        <taxon>Bacteria</taxon>
        <taxon>Bacillati</taxon>
        <taxon>Actinomycetota</taxon>
        <taxon>Actinomycetes</taxon>
        <taxon>Micrococcales</taxon>
        <taxon>Tropherymataceae</taxon>
        <taxon>Tropheryma</taxon>
    </lineage>
</organism>
<dbReference type="EC" id="3.6.1.23" evidence="1"/>
<dbReference type="EMBL" id="AE014184">
    <property type="protein sequence ID" value="AAO44584.1"/>
    <property type="molecule type" value="Genomic_DNA"/>
</dbReference>
<dbReference type="RefSeq" id="WP_011096231.1">
    <property type="nucleotide sequence ID" value="NC_004572.3"/>
</dbReference>
<dbReference type="SMR" id="Q83G43"/>
<dbReference type="STRING" id="203267.TWT_487"/>
<dbReference type="GeneID" id="67388051"/>
<dbReference type="KEGG" id="twh:TWT_487"/>
<dbReference type="eggNOG" id="COG0756">
    <property type="taxonomic scope" value="Bacteria"/>
</dbReference>
<dbReference type="HOGENOM" id="CLU_068508_1_3_11"/>
<dbReference type="OrthoDB" id="9809956at2"/>
<dbReference type="UniPathway" id="UPA00610">
    <property type="reaction ID" value="UER00666"/>
</dbReference>
<dbReference type="Proteomes" id="UP000002200">
    <property type="component" value="Chromosome"/>
</dbReference>
<dbReference type="GO" id="GO:0004170">
    <property type="term" value="F:dUTP diphosphatase activity"/>
    <property type="evidence" value="ECO:0007669"/>
    <property type="project" value="UniProtKB-UniRule"/>
</dbReference>
<dbReference type="GO" id="GO:0000287">
    <property type="term" value="F:magnesium ion binding"/>
    <property type="evidence" value="ECO:0007669"/>
    <property type="project" value="UniProtKB-UniRule"/>
</dbReference>
<dbReference type="GO" id="GO:0006226">
    <property type="term" value="P:dUMP biosynthetic process"/>
    <property type="evidence" value="ECO:0007669"/>
    <property type="project" value="UniProtKB-UniRule"/>
</dbReference>
<dbReference type="GO" id="GO:0046081">
    <property type="term" value="P:dUTP catabolic process"/>
    <property type="evidence" value="ECO:0007669"/>
    <property type="project" value="InterPro"/>
</dbReference>
<dbReference type="CDD" id="cd07557">
    <property type="entry name" value="trimeric_dUTPase"/>
    <property type="match status" value="1"/>
</dbReference>
<dbReference type="Gene3D" id="2.70.40.10">
    <property type="match status" value="1"/>
</dbReference>
<dbReference type="HAMAP" id="MF_00116">
    <property type="entry name" value="dUTPase_bact"/>
    <property type="match status" value="1"/>
</dbReference>
<dbReference type="InterPro" id="IPR008181">
    <property type="entry name" value="dUTPase"/>
</dbReference>
<dbReference type="InterPro" id="IPR029054">
    <property type="entry name" value="dUTPase-like"/>
</dbReference>
<dbReference type="InterPro" id="IPR036157">
    <property type="entry name" value="dUTPase-like_sf"/>
</dbReference>
<dbReference type="InterPro" id="IPR033704">
    <property type="entry name" value="dUTPase_trimeric"/>
</dbReference>
<dbReference type="NCBIfam" id="TIGR00576">
    <property type="entry name" value="dut"/>
    <property type="match status" value="1"/>
</dbReference>
<dbReference type="NCBIfam" id="NF001862">
    <property type="entry name" value="PRK00601.1"/>
    <property type="match status" value="1"/>
</dbReference>
<dbReference type="PANTHER" id="PTHR11241">
    <property type="entry name" value="DEOXYURIDINE 5'-TRIPHOSPHATE NUCLEOTIDOHYDROLASE"/>
    <property type="match status" value="1"/>
</dbReference>
<dbReference type="PANTHER" id="PTHR11241:SF0">
    <property type="entry name" value="DEOXYURIDINE 5'-TRIPHOSPHATE NUCLEOTIDOHYDROLASE"/>
    <property type="match status" value="1"/>
</dbReference>
<dbReference type="Pfam" id="PF00692">
    <property type="entry name" value="dUTPase"/>
    <property type="match status" value="1"/>
</dbReference>
<dbReference type="SUPFAM" id="SSF51283">
    <property type="entry name" value="dUTPase-like"/>
    <property type="match status" value="1"/>
</dbReference>
<feature type="chain" id="PRO_0000182915" description="Deoxyuridine 5'-triphosphate nucleotidohydrolase">
    <location>
        <begin position="1"/>
        <end position="146"/>
    </location>
</feature>
<feature type="binding site" evidence="1">
    <location>
        <begin position="60"/>
        <end position="62"/>
    </location>
    <ligand>
        <name>substrate</name>
    </ligand>
</feature>
<feature type="binding site" evidence="1">
    <location>
        <position position="73"/>
    </location>
    <ligand>
        <name>substrate</name>
    </ligand>
</feature>
<feature type="binding site" evidence="1">
    <location>
        <begin position="77"/>
        <end position="79"/>
    </location>
    <ligand>
        <name>substrate</name>
    </ligand>
</feature>
<name>DUT_TROWT</name>
<proteinExistence type="inferred from homology"/>
<keyword id="KW-0378">Hydrolase</keyword>
<keyword id="KW-0460">Magnesium</keyword>
<keyword id="KW-0479">Metal-binding</keyword>
<keyword id="KW-0546">Nucleotide metabolism</keyword>
<keyword id="KW-1185">Reference proteome</keyword>
<gene>
    <name evidence="1" type="primary">dut</name>
    <name type="ordered locus">TWT_487</name>
</gene>